<reference key="1">
    <citation type="journal article" date="2004" name="Proc. Natl. Acad. Sci. U.S.A.">
        <title>Genomic analysis of Bacteroides fragilis reveals extensive DNA inversions regulating cell surface adaptation.</title>
        <authorList>
            <person name="Kuwahara T."/>
            <person name="Yamashita A."/>
            <person name="Hirakawa H."/>
            <person name="Nakayama H."/>
            <person name="Toh H."/>
            <person name="Okada N."/>
            <person name="Kuhara S."/>
            <person name="Hattori M."/>
            <person name="Hayashi T."/>
            <person name="Ohnishi Y."/>
        </authorList>
    </citation>
    <scope>NUCLEOTIDE SEQUENCE [LARGE SCALE GENOMIC DNA]</scope>
    <source>
        <strain>YCH46</strain>
    </source>
</reference>
<name>ASNA_BACFR</name>
<gene>
    <name evidence="1" type="primary">asnA</name>
    <name type="ordered locus">BF3815</name>
</gene>
<dbReference type="EC" id="6.3.1.1" evidence="1"/>
<dbReference type="EMBL" id="AP006841">
    <property type="protein sequence ID" value="BAD50557.1"/>
    <property type="molecule type" value="Genomic_DNA"/>
</dbReference>
<dbReference type="RefSeq" id="WP_005790904.1">
    <property type="nucleotide sequence ID" value="NZ_UYXF01000018.1"/>
</dbReference>
<dbReference type="RefSeq" id="YP_101091.1">
    <property type="nucleotide sequence ID" value="NC_006347.1"/>
</dbReference>
<dbReference type="SMR" id="Q64PM4"/>
<dbReference type="STRING" id="295405.BF3815"/>
<dbReference type="GeneID" id="60369667"/>
<dbReference type="KEGG" id="bfr:BF3815"/>
<dbReference type="PATRIC" id="fig|295405.11.peg.3663"/>
<dbReference type="HOGENOM" id="CLU_071543_0_0_10"/>
<dbReference type="OrthoDB" id="9766088at2"/>
<dbReference type="UniPathway" id="UPA00134">
    <property type="reaction ID" value="UER00194"/>
</dbReference>
<dbReference type="Proteomes" id="UP000002197">
    <property type="component" value="Chromosome"/>
</dbReference>
<dbReference type="GO" id="GO:0005829">
    <property type="term" value="C:cytosol"/>
    <property type="evidence" value="ECO:0007669"/>
    <property type="project" value="TreeGrafter"/>
</dbReference>
<dbReference type="GO" id="GO:0004071">
    <property type="term" value="F:aspartate-ammonia ligase activity"/>
    <property type="evidence" value="ECO:0007669"/>
    <property type="project" value="UniProtKB-UniRule"/>
</dbReference>
<dbReference type="GO" id="GO:0005524">
    <property type="term" value="F:ATP binding"/>
    <property type="evidence" value="ECO:0007669"/>
    <property type="project" value="UniProtKB-UniRule"/>
</dbReference>
<dbReference type="GO" id="GO:0070981">
    <property type="term" value="P:L-asparagine biosynthetic process"/>
    <property type="evidence" value="ECO:0007669"/>
    <property type="project" value="UniProtKB-UniRule"/>
</dbReference>
<dbReference type="CDD" id="cd00645">
    <property type="entry name" value="AsnA"/>
    <property type="match status" value="1"/>
</dbReference>
<dbReference type="Gene3D" id="3.30.930.10">
    <property type="entry name" value="Bira Bifunctional Protein, Domain 2"/>
    <property type="match status" value="1"/>
</dbReference>
<dbReference type="HAMAP" id="MF_00555">
    <property type="entry name" value="AsnA"/>
    <property type="match status" value="1"/>
</dbReference>
<dbReference type="InterPro" id="IPR006195">
    <property type="entry name" value="aa-tRNA-synth_II"/>
</dbReference>
<dbReference type="InterPro" id="IPR045864">
    <property type="entry name" value="aa-tRNA-synth_II/BPL/LPL"/>
</dbReference>
<dbReference type="InterPro" id="IPR004618">
    <property type="entry name" value="AsnA"/>
</dbReference>
<dbReference type="NCBIfam" id="TIGR00669">
    <property type="entry name" value="asnA"/>
    <property type="match status" value="1"/>
</dbReference>
<dbReference type="PANTHER" id="PTHR30073">
    <property type="entry name" value="ASPARTATE--AMMONIA LIGASE"/>
    <property type="match status" value="1"/>
</dbReference>
<dbReference type="PANTHER" id="PTHR30073:SF5">
    <property type="entry name" value="ASPARTATE--AMMONIA LIGASE"/>
    <property type="match status" value="1"/>
</dbReference>
<dbReference type="Pfam" id="PF03590">
    <property type="entry name" value="AsnA"/>
    <property type="match status" value="1"/>
</dbReference>
<dbReference type="PIRSF" id="PIRSF001555">
    <property type="entry name" value="Asp_ammon_ligase"/>
    <property type="match status" value="1"/>
</dbReference>
<dbReference type="SUPFAM" id="SSF55681">
    <property type="entry name" value="Class II aaRS and biotin synthetases"/>
    <property type="match status" value="1"/>
</dbReference>
<dbReference type="PROSITE" id="PS50862">
    <property type="entry name" value="AA_TRNA_LIGASE_II"/>
    <property type="match status" value="1"/>
</dbReference>
<feature type="chain" id="PRO_1000017937" description="Aspartate--ammonia ligase">
    <location>
        <begin position="1"/>
        <end position="345"/>
    </location>
</feature>
<organism>
    <name type="scientific">Bacteroides fragilis (strain YCH46)</name>
    <dbReference type="NCBI Taxonomy" id="295405"/>
    <lineage>
        <taxon>Bacteria</taxon>
        <taxon>Pseudomonadati</taxon>
        <taxon>Bacteroidota</taxon>
        <taxon>Bacteroidia</taxon>
        <taxon>Bacteroidales</taxon>
        <taxon>Bacteroidaceae</taxon>
        <taxon>Bacteroides</taxon>
    </lineage>
</organism>
<proteinExistence type="inferred from homology"/>
<evidence type="ECO:0000255" key="1">
    <source>
        <dbReference type="HAMAP-Rule" id="MF_00555"/>
    </source>
</evidence>
<comment type="catalytic activity">
    <reaction evidence="1">
        <text>L-aspartate + NH4(+) + ATP = L-asparagine + AMP + diphosphate + H(+)</text>
        <dbReference type="Rhea" id="RHEA:11372"/>
        <dbReference type="ChEBI" id="CHEBI:15378"/>
        <dbReference type="ChEBI" id="CHEBI:28938"/>
        <dbReference type="ChEBI" id="CHEBI:29991"/>
        <dbReference type="ChEBI" id="CHEBI:30616"/>
        <dbReference type="ChEBI" id="CHEBI:33019"/>
        <dbReference type="ChEBI" id="CHEBI:58048"/>
        <dbReference type="ChEBI" id="CHEBI:456215"/>
        <dbReference type="EC" id="6.3.1.1"/>
    </reaction>
</comment>
<comment type="pathway">
    <text evidence="1">Amino-acid biosynthesis; L-asparagine biosynthesis; L-asparagine from L-aspartate (ammonia route): step 1/1.</text>
</comment>
<comment type="subcellular location">
    <subcellularLocation>
        <location evidence="1">Cytoplasm</location>
    </subcellularLocation>
</comment>
<comment type="similarity">
    <text evidence="1">Belongs to the class-II aminoacyl-tRNA synthetase family. AsnA subfamily.</text>
</comment>
<protein>
    <recommendedName>
        <fullName evidence="1">Aspartate--ammonia ligase</fullName>
        <ecNumber evidence="1">6.3.1.1</ecNumber>
    </recommendedName>
    <alternativeName>
        <fullName evidence="1">Asparagine synthetase A</fullName>
    </alternativeName>
</protein>
<accession>Q64PM4</accession>
<keyword id="KW-0028">Amino-acid biosynthesis</keyword>
<keyword id="KW-0061">Asparagine biosynthesis</keyword>
<keyword id="KW-0067">ATP-binding</keyword>
<keyword id="KW-0963">Cytoplasm</keyword>
<keyword id="KW-0436">Ligase</keyword>
<keyword id="KW-0547">Nucleotide-binding</keyword>
<sequence>MSYLIKPQNYKPLLDLKQTELGIKQIKEFFQLNLSSELRLRRVTAPLFVLKGMGINDDLNGIERPVSFPIKDLGDAQAEVVHSLAKWKRLTLADYHIEPGYGIYTDMNAIRSDEELGNLHSLYVDQWDWERVITAEDRNADFLKEIVNRIYAAMIRTEYMVYEMYPQIKPCLPQKLHFIHSEELRQLYPDMEPKCREHAICKKYGAVFIIGIGCKLSDGKKHDGRAPDYDDYTSKGLNDLPGLNGDLLLWDDVLQRSIELSSMGIRVDKEALLRQVKQENQEQRLELYFHKRLLNDTLPLSIGGGIGQSRLCMFYLRKAHIGEIQASIWPEEMRRECTALNIHLI</sequence>